<keyword id="KW-0049">Antioxidant</keyword>
<keyword id="KW-0963">Cytoplasm</keyword>
<keyword id="KW-1015">Disulfide bond</keyword>
<keyword id="KW-0560">Oxidoreductase</keyword>
<keyword id="KW-0575">Peroxidase</keyword>
<keyword id="KW-0676">Redox-active center</keyword>
<keyword id="KW-1185">Reference proteome</keyword>
<gene>
    <name type="primary">ykuU</name>
    <name type="ordered locus">BSU14220</name>
</gene>
<proteinExistence type="inferred from homology"/>
<feature type="chain" id="PRO_0000386533" description="Putative peroxiredoxin YkuU">
    <location>
        <begin position="1"/>
        <end position="180"/>
    </location>
</feature>
<feature type="domain" description="Thioredoxin" evidence="3">
    <location>
        <begin position="4"/>
        <end position="165"/>
    </location>
</feature>
<feature type="active site" description="Cysteine sulfenic acid (-SOH) intermediate" evidence="1">
    <location>
        <position position="52"/>
    </location>
</feature>
<feature type="disulfide bond" description="Interchain (with C-169); in linked form" evidence="1">
    <location>
        <position position="52"/>
    </location>
</feature>
<feature type="disulfide bond" description="Interchain (with C-52); in linked form" evidence="1">
    <location>
        <position position="169"/>
    </location>
</feature>
<protein>
    <recommendedName>
        <fullName>Putative peroxiredoxin YkuU</fullName>
        <ecNumber>1.11.1.-</ecNumber>
    </recommendedName>
</protein>
<reference key="1">
    <citation type="submission" date="1997-11" db="EMBL/GenBank/DDBJ databases">
        <title>Sequence of the Bacillus subtilis chromosome from ykuA to cse-15.</title>
        <authorList>
            <person name="Scanlan E."/>
            <person name="Devine K.M."/>
        </authorList>
    </citation>
    <scope>NUCLEOTIDE SEQUENCE [GENOMIC DNA]</scope>
    <source>
        <strain>168</strain>
    </source>
</reference>
<reference key="2">
    <citation type="journal article" date="1997" name="Nature">
        <title>The complete genome sequence of the Gram-positive bacterium Bacillus subtilis.</title>
        <authorList>
            <person name="Kunst F."/>
            <person name="Ogasawara N."/>
            <person name="Moszer I."/>
            <person name="Albertini A.M."/>
            <person name="Alloni G."/>
            <person name="Azevedo V."/>
            <person name="Bertero M.G."/>
            <person name="Bessieres P."/>
            <person name="Bolotin A."/>
            <person name="Borchert S."/>
            <person name="Borriss R."/>
            <person name="Boursier L."/>
            <person name="Brans A."/>
            <person name="Braun M."/>
            <person name="Brignell S.C."/>
            <person name="Bron S."/>
            <person name="Brouillet S."/>
            <person name="Bruschi C.V."/>
            <person name="Caldwell B."/>
            <person name="Capuano V."/>
            <person name="Carter N.M."/>
            <person name="Choi S.-K."/>
            <person name="Codani J.-J."/>
            <person name="Connerton I.F."/>
            <person name="Cummings N.J."/>
            <person name="Daniel R.A."/>
            <person name="Denizot F."/>
            <person name="Devine K.M."/>
            <person name="Duesterhoeft A."/>
            <person name="Ehrlich S.D."/>
            <person name="Emmerson P.T."/>
            <person name="Entian K.-D."/>
            <person name="Errington J."/>
            <person name="Fabret C."/>
            <person name="Ferrari E."/>
            <person name="Foulger D."/>
            <person name="Fritz C."/>
            <person name="Fujita M."/>
            <person name="Fujita Y."/>
            <person name="Fuma S."/>
            <person name="Galizzi A."/>
            <person name="Galleron N."/>
            <person name="Ghim S.-Y."/>
            <person name="Glaser P."/>
            <person name="Goffeau A."/>
            <person name="Golightly E.J."/>
            <person name="Grandi G."/>
            <person name="Guiseppi G."/>
            <person name="Guy B.J."/>
            <person name="Haga K."/>
            <person name="Haiech J."/>
            <person name="Harwood C.R."/>
            <person name="Henaut A."/>
            <person name="Hilbert H."/>
            <person name="Holsappel S."/>
            <person name="Hosono S."/>
            <person name="Hullo M.-F."/>
            <person name="Itaya M."/>
            <person name="Jones L.-M."/>
            <person name="Joris B."/>
            <person name="Karamata D."/>
            <person name="Kasahara Y."/>
            <person name="Klaerr-Blanchard M."/>
            <person name="Klein C."/>
            <person name="Kobayashi Y."/>
            <person name="Koetter P."/>
            <person name="Koningstein G."/>
            <person name="Krogh S."/>
            <person name="Kumano M."/>
            <person name="Kurita K."/>
            <person name="Lapidus A."/>
            <person name="Lardinois S."/>
            <person name="Lauber J."/>
            <person name="Lazarevic V."/>
            <person name="Lee S.-M."/>
            <person name="Levine A."/>
            <person name="Liu H."/>
            <person name="Masuda S."/>
            <person name="Mauel C."/>
            <person name="Medigue C."/>
            <person name="Medina N."/>
            <person name="Mellado R.P."/>
            <person name="Mizuno M."/>
            <person name="Moestl D."/>
            <person name="Nakai S."/>
            <person name="Noback M."/>
            <person name="Noone D."/>
            <person name="O'Reilly M."/>
            <person name="Ogawa K."/>
            <person name="Ogiwara A."/>
            <person name="Oudega B."/>
            <person name="Park S.-H."/>
            <person name="Parro V."/>
            <person name="Pohl T.M."/>
            <person name="Portetelle D."/>
            <person name="Porwollik S."/>
            <person name="Prescott A.M."/>
            <person name="Presecan E."/>
            <person name="Pujic P."/>
            <person name="Purnelle B."/>
            <person name="Rapoport G."/>
            <person name="Rey M."/>
            <person name="Reynolds S."/>
            <person name="Rieger M."/>
            <person name="Rivolta C."/>
            <person name="Rocha E."/>
            <person name="Roche B."/>
            <person name="Rose M."/>
            <person name="Sadaie Y."/>
            <person name="Sato T."/>
            <person name="Scanlan E."/>
            <person name="Schleich S."/>
            <person name="Schroeter R."/>
            <person name="Scoffone F."/>
            <person name="Sekiguchi J."/>
            <person name="Sekowska A."/>
            <person name="Seror S.J."/>
            <person name="Serror P."/>
            <person name="Shin B.-S."/>
            <person name="Soldo B."/>
            <person name="Sorokin A."/>
            <person name="Tacconi E."/>
            <person name="Takagi T."/>
            <person name="Takahashi H."/>
            <person name="Takemaru K."/>
            <person name="Takeuchi M."/>
            <person name="Tamakoshi A."/>
            <person name="Tanaka T."/>
            <person name="Terpstra P."/>
            <person name="Tognoni A."/>
            <person name="Tosato V."/>
            <person name="Uchiyama S."/>
            <person name="Vandenbol M."/>
            <person name="Vannier F."/>
            <person name="Vassarotti A."/>
            <person name="Viari A."/>
            <person name="Wambutt R."/>
            <person name="Wedler E."/>
            <person name="Wedler H."/>
            <person name="Weitzenegger T."/>
            <person name="Winters P."/>
            <person name="Wipat A."/>
            <person name="Yamamoto H."/>
            <person name="Yamane K."/>
            <person name="Yasumoto K."/>
            <person name="Yata K."/>
            <person name="Yoshida K."/>
            <person name="Yoshikawa H.-F."/>
            <person name="Zumstein E."/>
            <person name="Yoshikawa H."/>
            <person name="Danchin A."/>
        </authorList>
    </citation>
    <scope>NUCLEOTIDE SEQUENCE [LARGE SCALE GENOMIC DNA]</scope>
    <source>
        <strain>168</strain>
    </source>
</reference>
<sequence length="180" mass="20447">MAERMVGKQAPRFEMEAVLASKEFGKVSLEENMKNDKWTVLFFYPMDFTFVCPTEITAMSDRYDEFEDLDAEVIGVSTDTIHTHLAWINTDRKENGLGQLKYPLAADTNHEVSREYGVLIEEEGVALRGLFIINPEGELQYQTVFHNNIGRDVDETLRVLQALQTGGLCPANWKPGQKTL</sequence>
<comment type="function">
    <text evidence="1">Thiol-specific peroxidase that catalyzes the reduction of hydrogen peroxide and organic hydroperoxides to water and alcohols, respectively. Plays a role in cell protection against oxidative stress by detoxifying peroxides.</text>
</comment>
<comment type="catalytic activity">
    <reaction>
        <text>a hydroperoxide + [protein]-dithiol = [protein]-disulfide + an alcohol + H2O</text>
        <dbReference type="Rhea" id="RHEA:10008"/>
        <dbReference type="Rhea" id="RHEA-COMP:10593"/>
        <dbReference type="Rhea" id="RHEA-COMP:10594"/>
        <dbReference type="ChEBI" id="CHEBI:15377"/>
        <dbReference type="ChEBI" id="CHEBI:29950"/>
        <dbReference type="ChEBI" id="CHEBI:30879"/>
        <dbReference type="ChEBI" id="CHEBI:35924"/>
        <dbReference type="ChEBI" id="CHEBI:50058"/>
    </reaction>
</comment>
<comment type="subunit">
    <text evidence="1">Homodimer; disulfide-linked, upon oxidation.</text>
</comment>
<comment type="subcellular location">
    <subcellularLocation>
        <location evidence="2">Cytoplasm</location>
    </subcellularLocation>
</comment>
<comment type="miscellaneous">
    <text evidence="1">The active site is a conserved redox-active cysteine residue, the peroxidatic cysteine (C(P)), which makes the nucleophilic attack on the peroxide substrate. The peroxide oxidizes the C(P)-SH to cysteine sulfenic acid (C(P)-SOH), which then reacts with another cysteine residue, the resolving cysteine (C(R)), to form a disulfide bridge. The disulfide is subsequently reduced by an appropriate electron donor to complete the catalytic cycle. In this typical 2-Cys peroxiredoxin, C(R) is provided by the other dimeric subunit to form an intersubunit disulfide.</text>
</comment>
<comment type="similarity">
    <text evidence="4">Belongs to the peroxiredoxin family. AhpC/Prx1 subfamily.</text>
</comment>
<evidence type="ECO:0000250" key="1">
    <source>
        <dbReference type="UniProtKB" id="P0A251"/>
    </source>
</evidence>
<evidence type="ECO:0000250" key="2">
    <source>
        <dbReference type="UniProtKB" id="P0AE08"/>
    </source>
</evidence>
<evidence type="ECO:0000255" key="3">
    <source>
        <dbReference type="PROSITE-ProRule" id="PRU00691"/>
    </source>
</evidence>
<evidence type="ECO:0000305" key="4"/>
<name>YKUU_BACSU</name>
<dbReference type="EC" id="1.11.1.-"/>
<dbReference type="EMBL" id="AJ222587">
    <property type="protein sequence ID" value="CAA10884.1"/>
    <property type="molecule type" value="Genomic_DNA"/>
</dbReference>
<dbReference type="EMBL" id="AL009126">
    <property type="protein sequence ID" value="CAB13295.1"/>
    <property type="molecule type" value="Genomic_DNA"/>
</dbReference>
<dbReference type="PIR" id="B69867">
    <property type="entry name" value="B69867"/>
</dbReference>
<dbReference type="SMR" id="O34564"/>
<dbReference type="FunCoup" id="O34564">
    <property type="interactions" value="563"/>
</dbReference>
<dbReference type="STRING" id="224308.BSU14220"/>
<dbReference type="PaxDb" id="224308-BSU14220"/>
<dbReference type="EnsemblBacteria" id="CAB13295">
    <property type="protein sequence ID" value="CAB13295"/>
    <property type="gene ID" value="BSU_14220"/>
</dbReference>
<dbReference type="GeneID" id="938810"/>
<dbReference type="KEGG" id="bsu:BSU14220"/>
<dbReference type="PATRIC" id="fig|224308.179.peg.1551"/>
<dbReference type="eggNOG" id="COG0450">
    <property type="taxonomic scope" value="Bacteria"/>
</dbReference>
<dbReference type="InParanoid" id="O34564"/>
<dbReference type="OrthoDB" id="9812811at2"/>
<dbReference type="PhylomeDB" id="O34564"/>
<dbReference type="BioCyc" id="BSUB:BSU14220-MONOMER"/>
<dbReference type="PRO" id="PR:O34564"/>
<dbReference type="Proteomes" id="UP000001570">
    <property type="component" value="Chromosome"/>
</dbReference>
<dbReference type="GO" id="GO:0005829">
    <property type="term" value="C:cytosol"/>
    <property type="evidence" value="ECO:0000318"/>
    <property type="project" value="GO_Central"/>
</dbReference>
<dbReference type="GO" id="GO:0008379">
    <property type="term" value="F:thioredoxin peroxidase activity"/>
    <property type="evidence" value="ECO:0000318"/>
    <property type="project" value="GO_Central"/>
</dbReference>
<dbReference type="GO" id="GO:0045454">
    <property type="term" value="P:cell redox homeostasis"/>
    <property type="evidence" value="ECO:0000318"/>
    <property type="project" value="GO_Central"/>
</dbReference>
<dbReference type="GO" id="GO:0042744">
    <property type="term" value="P:hydrogen peroxide catabolic process"/>
    <property type="evidence" value="ECO:0000318"/>
    <property type="project" value="GO_Central"/>
</dbReference>
<dbReference type="GO" id="GO:0006979">
    <property type="term" value="P:response to oxidative stress"/>
    <property type="evidence" value="ECO:0000318"/>
    <property type="project" value="GO_Central"/>
</dbReference>
<dbReference type="CDD" id="cd03015">
    <property type="entry name" value="PRX_Typ2cys"/>
    <property type="match status" value="1"/>
</dbReference>
<dbReference type="FunFam" id="3.40.30.10:FF:000101">
    <property type="entry name" value="2-cys peroxiredoxin"/>
    <property type="match status" value="1"/>
</dbReference>
<dbReference type="Gene3D" id="3.40.30.10">
    <property type="entry name" value="Glutaredoxin"/>
    <property type="match status" value="1"/>
</dbReference>
<dbReference type="InterPro" id="IPR000866">
    <property type="entry name" value="AhpC/TSA"/>
</dbReference>
<dbReference type="InterPro" id="IPR050217">
    <property type="entry name" value="Peroxiredoxin"/>
</dbReference>
<dbReference type="InterPro" id="IPR024706">
    <property type="entry name" value="Peroxiredoxin_AhpC-typ"/>
</dbReference>
<dbReference type="InterPro" id="IPR019479">
    <property type="entry name" value="Peroxiredoxin_C"/>
</dbReference>
<dbReference type="InterPro" id="IPR036249">
    <property type="entry name" value="Thioredoxin-like_sf"/>
</dbReference>
<dbReference type="InterPro" id="IPR013766">
    <property type="entry name" value="Thioredoxin_domain"/>
</dbReference>
<dbReference type="PANTHER" id="PTHR10681:SF121">
    <property type="entry name" value="ALKYL HYDROPEROXIDE REDUCTASE C"/>
    <property type="match status" value="1"/>
</dbReference>
<dbReference type="PANTHER" id="PTHR10681">
    <property type="entry name" value="THIOREDOXIN PEROXIDASE"/>
    <property type="match status" value="1"/>
</dbReference>
<dbReference type="Pfam" id="PF10417">
    <property type="entry name" value="1-cysPrx_C"/>
    <property type="match status" value="1"/>
</dbReference>
<dbReference type="Pfam" id="PF00578">
    <property type="entry name" value="AhpC-TSA"/>
    <property type="match status" value="1"/>
</dbReference>
<dbReference type="PIRSF" id="PIRSF000239">
    <property type="entry name" value="AHPC"/>
    <property type="match status" value="1"/>
</dbReference>
<dbReference type="SUPFAM" id="SSF52833">
    <property type="entry name" value="Thioredoxin-like"/>
    <property type="match status" value="1"/>
</dbReference>
<dbReference type="PROSITE" id="PS51352">
    <property type="entry name" value="THIOREDOXIN_2"/>
    <property type="match status" value="1"/>
</dbReference>
<organism>
    <name type="scientific">Bacillus subtilis (strain 168)</name>
    <dbReference type="NCBI Taxonomy" id="224308"/>
    <lineage>
        <taxon>Bacteria</taxon>
        <taxon>Bacillati</taxon>
        <taxon>Bacillota</taxon>
        <taxon>Bacilli</taxon>
        <taxon>Bacillales</taxon>
        <taxon>Bacillaceae</taxon>
        <taxon>Bacillus</taxon>
    </lineage>
</organism>
<accession>O34564</accession>
<accession>Q796J8</accession>